<proteinExistence type="inferred from homology"/>
<comment type="function">
    <text evidence="1">Involved in regulation of glutamate metabolism.</text>
</comment>
<comment type="subunit">
    <text evidence="1">Monomer.</text>
</comment>
<comment type="PTM">
    <text evidence="1">Phosphorylated on Thr-22 by PknB. Phosphorylated on Thr-21 by PknG. Phosphorylation at either Thr-21 or Thr-22 prevents binding to target enzymes (By similarity).</text>
</comment>
<keyword id="KW-0597">Phosphoprotein</keyword>
<keyword id="KW-1185">Reference proteome</keyword>
<sequence>MTDMNPDIEKDQTSDEVTVETTSVFRADFLSELDAPAQAGTESAVSGVEGLPPGSALLVVKRGPNAGSRFLLDQAITSAGRHPDSDIFLDDVTVSRRHAEFRLENNEFNVVDVGSLNGTYVNREPVDSAVLANGDEVQIGKFRLVFLTGPKQGEDDGSTGGP</sequence>
<organism>
    <name type="scientific">Mycobacterium tuberculosis (strain CDC 1551 / Oshkosh)</name>
    <dbReference type="NCBI Taxonomy" id="83331"/>
    <lineage>
        <taxon>Bacteria</taxon>
        <taxon>Bacillati</taxon>
        <taxon>Actinomycetota</taxon>
        <taxon>Actinomycetes</taxon>
        <taxon>Mycobacteriales</taxon>
        <taxon>Mycobacteriaceae</taxon>
        <taxon>Mycobacterium</taxon>
        <taxon>Mycobacterium tuberculosis complex</taxon>
    </lineage>
</organism>
<feature type="chain" id="PRO_0000427862" description="Glycogen accumulation regulator GarA">
    <location>
        <begin position="1"/>
        <end position="162"/>
    </location>
</feature>
<feature type="domain" description="FHA" evidence="2">
    <location>
        <begin position="77"/>
        <end position="126"/>
    </location>
</feature>
<feature type="modified residue" description="Phosphothreonine; by PknG" evidence="1">
    <location>
        <position position="21"/>
    </location>
</feature>
<feature type="modified residue" description="Phosphothreonine; by PknB" evidence="1">
    <location>
        <position position="22"/>
    </location>
</feature>
<reference key="1">
    <citation type="journal article" date="2002" name="J. Bacteriol.">
        <title>Whole-genome comparison of Mycobacterium tuberculosis clinical and laboratory strains.</title>
        <authorList>
            <person name="Fleischmann R.D."/>
            <person name="Alland D."/>
            <person name="Eisen J.A."/>
            <person name="Carpenter L."/>
            <person name="White O."/>
            <person name="Peterson J.D."/>
            <person name="DeBoy R.T."/>
            <person name="Dodson R.J."/>
            <person name="Gwinn M.L."/>
            <person name="Haft D.H."/>
            <person name="Hickey E.K."/>
            <person name="Kolonay J.F."/>
            <person name="Nelson W.C."/>
            <person name="Umayam L.A."/>
            <person name="Ermolaeva M.D."/>
            <person name="Salzberg S.L."/>
            <person name="Delcher A."/>
            <person name="Utterback T.R."/>
            <person name="Weidman J.F."/>
            <person name="Khouri H.M."/>
            <person name="Gill J."/>
            <person name="Mikula A."/>
            <person name="Bishai W."/>
            <person name="Jacobs W.R. Jr."/>
            <person name="Venter J.C."/>
            <person name="Fraser C.M."/>
        </authorList>
    </citation>
    <scope>NUCLEOTIDE SEQUENCE [LARGE SCALE GENOMIC DNA]</scope>
    <source>
        <strain>CDC 1551 / Oshkosh</strain>
    </source>
</reference>
<name>GARA_MYCTO</name>
<gene>
    <name type="primary">garA</name>
    <name type="ordered locus">MT1875</name>
</gene>
<evidence type="ECO:0000250" key="1"/>
<evidence type="ECO:0000255" key="2">
    <source>
        <dbReference type="PROSITE-ProRule" id="PRU00086"/>
    </source>
</evidence>
<protein>
    <recommendedName>
        <fullName>Glycogen accumulation regulator GarA</fullName>
    </recommendedName>
</protein>
<accession>P9WJA8</accession>
<accession>I3V6A5</accession>
<accession>P64897</accession>
<accession>Q50606</accession>
<dbReference type="EMBL" id="AE000516">
    <property type="protein sequence ID" value="AAK46148.1"/>
    <property type="molecule type" value="Genomic_DNA"/>
</dbReference>
<dbReference type="PIR" id="D70721">
    <property type="entry name" value="D70721"/>
</dbReference>
<dbReference type="RefSeq" id="WP_003899041.1">
    <property type="nucleotide sequence ID" value="NZ_KK341227.1"/>
</dbReference>
<dbReference type="BMRB" id="P9WJA8"/>
<dbReference type="SMR" id="P9WJA8"/>
<dbReference type="GeneID" id="45425801"/>
<dbReference type="KEGG" id="mtc:MT1875"/>
<dbReference type="PATRIC" id="fig|83331.31.peg.2019"/>
<dbReference type="HOGENOM" id="CLU_108862_1_0_11"/>
<dbReference type="Proteomes" id="UP000001020">
    <property type="component" value="Chromosome"/>
</dbReference>
<dbReference type="CDD" id="cd22720">
    <property type="entry name" value="FHA_GarA-like"/>
    <property type="match status" value="1"/>
</dbReference>
<dbReference type="FunFam" id="2.60.200.20:FF:000027">
    <property type="entry name" value="Peptide-binding protein"/>
    <property type="match status" value="1"/>
</dbReference>
<dbReference type="Gene3D" id="2.60.200.20">
    <property type="match status" value="1"/>
</dbReference>
<dbReference type="InterPro" id="IPR050923">
    <property type="entry name" value="Cell_Proc_Reg/RNA_Proc"/>
</dbReference>
<dbReference type="InterPro" id="IPR000253">
    <property type="entry name" value="FHA_dom"/>
</dbReference>
<dbReference type="InterPro" id="IPR008984">
    <property type="entry name" value="SMAD_FHA_dom_sf"/>
</dbReference>
<dbReference type="PANTHER" id="PTHR23308">
    <property type="entry name" value="NUCLEAR INHIBITOR OF PROTEIN PHOSPHATASE-1"/>
    <property type="match status" value="1"/>
</dbReference>
<dbReference type="Pfam" id="PF00498">
    <property type="entry name" value="FHA"/>
    <property type="match status" value="1"/>
</dbReference>
<dbReference type="SMART" id="SM00240">
    <property type="entry name" value="FHA"/>
    <property type="match status" value="1"/>
</dbReference>
<dbReference type="SUPFAM" id="SSF49879">
    <property type="entry name" value="SMAD/FHA domain"/>
    <property type="match status" value="1"/>
</dbReference>
<dbReference type="PROSITE" id="PS50006">
    <property type="entry name" value="FHA_DOMAIN"/>
    <property type="match status" value="1"/>
</dbReference>